<evidence type="ECO:0000255" key="1">
    <source>
        <dbReference type="HAMAP-Rule" id="MF_00041"/>
    </source>
</evidence>
<organism>
    <name type="scientific">Lawsonia intracellularis (strain PHE/MN1-00)</name>
    <dbReference type="NCBI Taxonomy" id="363253"/>
    <lineage>
        <taxon>Bacteria</taxon>
        <taxon>Pseudomonadati</taxon>
        <taxon>Thermodesulfobacteriota</taxon>
        <taxon>Desulfovibrionia</taxon>
        <taxon>Desulfovibrionales</taxon>
        <taxon>Desulfovibrionaceae</taxon>
        <taxon>Lawsonia</taxon>
    </lineage>
</organism>
<comment type="catalytic activity">
    <reaction evidence="1">
        <text>tRNA(Cys) + L-cysteine + ATP = L-cysteinyl-tRNA(Cys) + AMP + diphosphate</text>
        <dbReference type="Rhea" id="RHEA:17773"/>
        <dbReference type="Rhea" id="RHEA-COMP:9661"/>
        <dbReference type="Rhea" id="RHEA-COMP:9679"/>
        <dbReference type="ChEBI" id="CHEBI:30616"/>
        <dbReference type="ChEBI" id="CHEBI:33019"/>
        <dbReference type="ChEBI" id="CHEBI:35235"/>
        <dbReference type="ChEBI" id="CHEBI:78442"/>
        <dbReference type="ChEBI" id="CHEBI:78517"/>
        <dbReference type="ChEBI" id="CHEBI:456215"/>
        <dbReference type="EC" id="6.1.1.16"/>
    </reaction>
</comment>
<comment type="cofactor">
    <cofactor evidence="1">
        <name>Zn(2+)</name>
        <dbReference type="ChEBI" id="CHEBI:29105"/>
    </cofactor>
    <text evidence="1">Binds 1 zinc ion per subunit.</text>
</comment>
<comment type="subunit">
    <text evidence="1">Monomer.</text>
</comment>
<comment type="subcellular location">
    <subcellularLocation>
        <location evidence="1">Cytoplasm</location>
    </subcellularLocation>
</comment>
<comment type="similarity">
    <text evidence="1">Belongs to the class-I aminoacyl-tRNA synthetase family.</text>
</comment>
<reference key="1">
    <citation type="submission" date="2005-11" db="EMBL/GenBank/DDBJ databases">
        <title>The complete genome sequence of Lawsonia intracellularis: the causative agent of proliferative enteropathy.</title>
        <authorList>
            <person name="Kaur K."/>
            <person name="Zhang Q."/>
            <person name="Beckler D."/>
            <person name="Munir S."/>
            <person name="Li L."/>
            <person name="Kinsley K."/>
            <person name="Herron L."/>
            <person name="Peterson A."/>
            <person name="May B."/>
            <person name="Singh S."/>
            <person name="Gebhart C."/>
            <person name="Kapur V."/>
        </authorList>
    </citation>
    <scope>NUCLEOTIDE SEQUENCE [LARGE SCALE GENOMIC DNA]</scope>
    <source>
        <strain>PHE/MN1-00</strain>
    </source>
</reference>
<proteinExistence type="inferred from homology"/>
<dbReference type="EC" id="6.1.1.16" evidence="1"/>
<dbReference type="EMBL" id="AM180252">
    <property type="protein sequence ID" value="CAJ54662.1"/>
    <property type="molecule type" value="Genomic_DNA"/>
</dbReference>
<dbReference type="RefSeq" id="WP_011526691.1">
    <property type="nucleotide sequence ID" value="NC_008011.1"/>
</dbReference>
<dbReference type="SMR" id="Q1MQR5"/>
<dbReference type="STRING" id="363253.LI0608"/>
<dbReference type="KEGG" id="lip:LI0608"/>
<dbReference type="eggNOG" id="COG0215">
    <property type="taxonomic scope" value="Bacteria"/>
</dbReference>
<dbReference type="HOGENOM" id="CLU_013528_0_1_7"/>
<dbReference type="OrthoDB" id="9815130at2"/>
<dbReference type="Proteomes" id="UP000002430">
    <property type="component" value="Chromosome"/>
</dbReference>
<dbReference type="GO" id="GO:0005829">
    <property type="term" value="C:cytosol"/>
    <property type="evidence" value="ECO:0007669"/>
    <property type="project" value="TreeGrafter"/>
</dbReference>
<dbReference type="GO" id="GO:0005524">
    <property type="term" value="F:ATP binding"/>
    <property type="evidence" value="ECO:0007669"/>
    <property type="project" value="UniProtKB-UniRule"/>
</dbReference>
<dbReference type="GO" id="GO:0004817">
    <property type="term" value="F:cysteine-tRNA ligase activity"/>
    <property type="evidence" value="ECO:0007669"/>
    <property type="project" value="UniProtKB-UniRule"/>
</dbReference>
<dbReference type="GO" id="GO:0008270">
    <property type="term" value="F:zinc ion binding"/>
    <property type="evidence" value="ECO:0007669"/>
    <property type="project" value="UniProtKB-UniRule"/>
</dbReference>
<dbReference type="GO" id="GO:0006423">
    <property type="term" value="P:cysteinyl-tRNA aminoacylation"/>
    <property type="evidence" value="ECO:0007669"/>
    <property type="project" value="UniProtKB-UniRule"/>
</dbReference>
<dbReference type="CDD" id="cd00672">
    <property type="entry name" value="CysRS_core"/>
    <property type="match status" value="1"/>
</dbReference>
<dbReference type="FunFam" id="3.40.50.620:FF:000009">
    <property type="entry name" value="Cysteine--tRNA ligase"/>
    <property type="match status" value="1"/>
</dbReference>
<dbReference type="Gene3D" id="1.20.120.1910">
    <property type="entry name" value="Cysteine-tRNA ligase, C-terminal anti-codon recognition domain"/>
    <property type="match status" value="1"/>
</dbReference>
<dbReference type="Gene3D" id="3.40.50.620">
    <property type="entry name" value="HUPs"/>
    <property type="match status" value="1"/>
</dbReference>
<dbReference type="HAMAP" id="MF_00041">
    <property type="entry name" value="Cys_tRNA_synth"/>
    <property type="match status" value="1"/>
</dbReference>
<dbReference type="InterPro" id="IPR015803">
    <property type="entry name" value="Cys-tRNA-ligase"/>
</dbReference>
<dbReference type="InterPro" id="IPR015273">
    <property type="entry name" value="Cys-tRNA-synt_Ia_DALR"/>
</dbReference>
<dbReference type="InterPro" id="IPR024909">
    <property type="entry name" value="Cys-tRNA/MSH_ligase"/>
</dbReference>
<dbReference type="InterPro" id="IPR056411">
    <property type="entry name" value="CysS_C"/>
</dbReference>
<dbReference type="InterPro" id="IPR014729">
    <property type="entry name" value="Rossmann-like_a/b/a_fold"/>
</dbReference>
<dbReference type="InterPro" id="IPR032678">
    <property type="entry name" value="tRNA-synt_1_cat_dom"/>
</dbReference>
<dbReference type="InterPro" id="IPR009080">
    <property type="entry name" value="tRNAsynth_Ia_anticodon-bd"/>
</dbReference>
<dbReference type="NCBIfam" id="TIGR00435">
    <property type="entry name" value="cysS"/>
    <property type="match status" value="1"/>
</dbReference>
<dbReference type="PANTHER" id="PTHR10890:SF3">
    <property type="entry name" value="CYSTEINE--TRNA LIGASE, CYTOPLASMIC"/>
    <property type="match status" value="1"/>
</dbReference>
<dbReference type="PANTHER" id="PTHR10890">
    <property type="entry name" value="CYSTEINYL-TRNA SYNTHETASE"/>
    <property type="match status" value="1"/>
</dbReference>
<dbReference type="Pfam" id="PF23493">
    <property type="entry name" value="CysS_C"/>
    <property type="match status" value="1"/>
</dbReference>
<dbReference type="Pfam" id="PF09190">
    <property type="entry name" value="DALR_2"/>
    <property type="match status" value="1"/>
</dbReference>
<dbReference type="Pfam" id="PF01406">
    <property type="entry name" value="tRNA-synt_1e"/>
    <property type="match status" value="1"/>
</dbReference>
<dbReference type="PRINTS" id="PR00983">
    <property type="entry name" value="TRNASYNTHCYS"/>
</dbReference>
<dbReference type="SMART" id="SM00840">
    <property type="entry name" value="DALR_2"/>
    <property type="match status" value="1"/>
</dbReference>
<dbReference type="SUPFAM" id="SSF47323">
    <property type="entry name" value="Anticodon-binding domain of a subclass of class I aminoacyl-tRNA synthetases"/>
    <property type="match status" value="1"/>
</dbReference>
<dbReference type="SUPFAM" id="SSF52374">
    <property type="entry name" value="Nucleotidylyl transferase"/>
    <property type="match status" value="1"/>
</dbReference>
<sequence length="485" mass="55492">MHLYNTMEKKKEPLIPIISGKLGIYVCGITAYDFSHIGHARSAIVFDILVRLLRYQGYDVTFIRNFTDIDDKIINRANKEGRSSKEVAEEFINAFHEDMDRLGVLNADIEPKATDYIPEMIECCQKLLEADKAYITASGDVYFRVRSFPDYGKLSGRTPDELRIGVRIVPSEEKEDPLDFVLWKAAKPGEPSWESPWGRGRPGWHIECSAMSEKCWPLPLDIHGGGIDLIFPHHENEIAQTESIVNKPLAKIWMHNGLVQVNSEKMSKSLGNFKIVRDILEAYLPETLRFFLLKKHYRSPIDFSFEGMNETERSQKRVYECIAEVDKALERKSWDSGGSSSSILAELDEQFSLFMSALEDDCNTAAGLGHLFNIIHIVRRALDDKALYSTTDGKVVFEQFREIIRKVDILLGVFGQKPNSFLQDLKTIRIIRNKIDVNQVEELLSKRRQAREEKNFVQADEVRNTLASLGIEIRDTSEGQVWDIL</sequence>
<gene>
    <name evidence="1" type="primary">cysS</name>
    <name type="ordered locus">LI0608</name>
</gene>
<feature type="chain" id="PRO_0000332842" description="Cysteine--tRNA ligase">
    <location>
        <begin position="1"/>
        <end position="485"/>
    </location>
</feature>
<feature type="short sequence motif" description="'HIGH' region">
    <location>
        <begin position="29"/>
        <end position="39"/>
    </location>
</feature>
<feature type="short sequence motif" description="'KMSKS' region">
    <location>
        <begin position="265"/>
        <end position="269"/>
    </location>
</feature>
<feature type="binding site" evidence="1">
    <location>
        <position position="27"/>
    </location>
    <ligand>
        <name>Zn(2+)</name>
        <dbReference type="ChEBI" id="CHEBI:29105"/>
    </ligand>
</feature>
<feature type="binding site" evidence="1">
    <location>
        <position position="208"/>
    </location>
    <ligand>
        <name>Zn(2+)</name>
        <dbReference type="ChEBI" id="CHEBI:29105"/>
    </ligand>
</feature>
<feature type="binding site" evidence="1">
    <location>
        <position position="233"/>
    </location>
    <ligand>
        <name>Zn(2+)</name>
        <dbReference type="ChEBI" id="CHEBI:29105"/>
    </ligand>
</feature>
<feature type="binding site" evidence="1">
    <location>
        <position position="237"/>
    </location>
    <ligand>
        <name>Zn(2+)</name>
        <dbReference type="ChEBI" id="CHEBI:29105"/>
    </ligand>
</feature>
<feature type="binding site" evidence="1">
    <location>
        <position position="268"/>
    </location>
    <ligand>
        <name>ATP</name>
        <dbReference type="ChEBI" id="CHEBI:30616"/>
    </ligand>
</feature>
<keyword id="KW-0030">Aminoacyl-tRNA synthetase</keyword>
<keyword id="KW-0067">ATP-binding</keyword>
<keyword id="KW-0963">Cytoplasm</keyword>
<keyword id="KW-0436">Ligase</keyword>
<keyword id="KW-0479">Metal-binding</keyword>
<keyword id="KW-0547">Nucleotide-binding</keyword>
<keyword id="KW-0648">Protein biosynthesis</keyword>
<keyword id="KW-1185">Reference proteome</keyword>
<keyword id="KW-0862">Zinc</keyword>
<protein>
    <recommendedName>
        <fullName evidence="1">Cysteine--tRNA ligase</fullName>
        <ecNumber evidence="1">6.1.1.16</ecNumber>
    </recommendedName>
    <alternativeName>
        <fullName evidence="1">Cysteinyl-tRNA synthetase</fullName>
        <shortName evidence="1">CysRS</shortName>
    </alternativeName>
</protein>
<name>SYC_LAWIP</name>
<accession>Q1MQR5</accession>